<sequence length="171" mass="19189">MAEKRNIFLVGPMGAGKSTIGRHLAQMLHLEFHDSDQEIEQRTGADIAWVFDVEGEEGFRRREAQVIADLSEKQGIVLATGGGSVQSKDIRNHLSARGIVVYLETTIDKQVARTQRDKRRPLLQVDDPREVLENLAEIRNPLYEEIADVIVKTDDQSAKVVANQIIEKLGF</sequence>
<proteinExistence type="inferred from homology"/>
<protein>
    <recommendedName>
        <fullName evidence="1">Shikimate kinase</fullName>
        <shortName evidence="1">SK</shortName>
        <ecNumber evidence="1">2.7.1.71</ecNumber>
    </recommendedName>
</protein>
<reference key="1">
    <citation type="submission" date="2006-08" db="EMBL/GenBank/DDBJ databases">
        <title>Complete sequence of chromosome 1 of Shewanella sp. MR-7.</title>
        <authorList>
            <person name="Copeland A."/>
            <person name="Lucas S."/>
            <person name="Lapidus A."/>
            <person name="Barry K."/>
            <person name="Detter J.C."/>
            <person name="Glavina del Rio T."/>
            <person name="Hammon N."/>
            <person name="Israni S."/>
            <person name="Dalin E."/>
            <person name="Tice H."/>
            <person name="Pitluck S."/>
            <person name="Kiss H."/>
            <person name="Brettin T."/>
            <person name="Bruce D."/>
            <person name="Han C."/>
            <person name="Tapia R."/>
            <person name="Gilna P."/>
            <person name="Schmutz J."/>
            <person name="Larimer F."/>
            <person name="Land M."/>
            <person name="Hauser L."/>
            <person name="Kyrpides N."/>
            <person name="Mikhailova N."/>
            <person name="Nealson K."/>
            <person name="Konstantinidis K."/>
            <person name="Klappenbach J."/>
            <person name="Tiedje J."/>
            <person name="Richardson P."/>
        </authorList>
    </citation>
    <scope>NUCLEOTIDE SEQUENCE [LARGE SCALE GENOMIC DNA]</scope>
    <source>
        <strain>MR-7</strain>
    </source>
</reference>
<comment type="function">
    <text evidence="1">Catalyzes the specific phosphorylation of the 3-hydroxyl group of shikimic acid using ATP as a cosubstrate.</text>
</comment>
<comment type="catalytic activity">
    <reaction evidence="1">
        <text>shikimate + ATP = 3-phosphoshikimate + ADP + H(+)</text>
        <dbReference type="Rhea" id="RHEA:13121"/>
        <dbReference type="ChEBI" id="CHEBI:15378"/>
        <dbReference type="ChEBI" id="CHEBI:30616"/>
        <dbReference type="ChEBI" id="CHEBI:36208"/>
        <dbReference type="ChEBI" id="CHEBI:145989"/>
        <dbReference type="ChEBI" id="CHEBI:456216"/>
        <dbReference type="EC" id="2.7.1.71"/>
    </reaction>
</comment>
<comment type="cofactor">
    <cofactor evidence="1">
        <name>Mg(2+)</name>
        <dbReference type="ChEBI" id="CHEBI:18420"/>
    </cofactor>
    <text evidence="1">Binds 1 Mg(2+) ion per subunit.</text>
</comment>
<comment type="pathway">
    <text evidence="1">Metabolic intermediate biosynthesis; chorismate biosynthesis; chorismate from D-erythrose 4-phosphate and phosphoenolpyruvate: step 5/7.</text>
</comment>
<comment type="subunit">
    <text evidence="1">Monomer.</text>
</comment>
<comment type="subcellular location">
    <subcellularLocation>
        <location evidence="1">Cytoplasm</location>
    </subcellularLocation>
</comment>
<comment type="similarity">
    <text evidence="1">Belongs to the shikimate kinase family.</text>
</comment>
<evidence type="ECO:0000255" key="1">
    <source>
        <dbReference type="HAMAP-Rule" id="MF_00109"/>
    </source>
</evidence>
<gene>
    <name evidence="1" type="primary">aroK</name>
    <name type="ordered locus">Shewmr7_0247</name>
</gene>
<organism>
    <name type="scientific">Shewanella sp. (strain MR-7)</name>
    <dbReference type="NCBI Taxonomy" id="60481"/>
    <lineage>
        <taxon>Bacteria</taxon>
        <taxon>Pseudomonadati</taxon>
        <taxon>Pseudomonadota</taxon>
        <taxon>Gammaproteobacteria</taxon>
        <taxon>Alteromonadales</taxon>
        <taxon>Shewanellaceae</taxon>
        <taxon>Shewanella</taxon>
    </lineage>
</organism>
<keyword id="KW-0028">Amino-acid biosynthesis</keyword>
<keyword id="KW-0057">Aromatic amino acid biosynthesis</keyword>
<keyword id="KW-0067">ATP-binding</keyword>
<keyword id="KW-0963">Cytoplasm</keyword>
<keyword id="KW-0418">Kinase</keyword>
<keyword id="KW-0460">Magnesium</keyword>
<keyword id="KW-0479">Metal-binding</keyword>
<keyword id="KW-0547">Nucleotide-binding</keyword>
<keyword id="KW-0808">Transferase</keyword>
<dbReference type="EC" id="2.7.1.71" evidence="1"/>
<dbReference type="EMBL" id="CP000444">
    <property type="protein sequence ID" value="ABI41252.1"/>
    <property type="molecule type" value="Genomic_DNA"/>
</dbReference>
<dbReference type="SMR" id="Q0I053"/>
<dbReference type="KEGG" id="shm:Shewmr7_0247"/>
<dbReference type="HOGENOM" id="CLU_057607_2_2_6"/>
<dbReference type="UniPathway" id="UPA00053">
    <property type="reaction ID" value="UER00088"/>
</dbReference>
<dbReference type="GO" id="GO:0005829">
    <property type="term" value="C:cytosol"/>
    <property type="evidence" value="ECO:0007669"/>
    <property type="project" value="TreeGrafter"/>
</dbReference>
<dbReference type="GO" id="GO:0005524">
    <property type="term" value="F:ATP binding"/>
    <property type="evidence" value="ECO:0007669"/>
    <property type="project" value="UniProtKB-UniRule"/>
</dbReference>
<dbReference type="GO" id="GO:0000287">
    <property type="term" value="F:magnesium ion binding"/>
    <property type="evidence" value="ECO:0007669"/>
    <property type="project" value="UniProtKB-UniRule"/>
</dbReference>
<dbReference type="GO" id="GO:0004765">
    <property type="term" value="F:shikimate kinase activity"/>
    <property type="evidence" value="ECO:0007669"/>
    <property type="project" value="UniProtKB-UniRule"/>
</dbReference>
<dbReference type="GO" id="GO:0008652">
    <property type="term" value="P:amino acid biosynthetic process"/>
    <property type="evidence" value="ECO:0007669"/>
    <property type="project" value="UniProtKB-KW"/>
</dbReference>
<dbReference type="GO" id="GO:0009073">
    <property type="term" value="P:aromatic amino acid family biosynthetic process"/>
    <property type="evidence" value="ECO:0007669"/>
    <property type="project" value="UniProtKB-KW"/>
</dbReference>
<dbReference type="GO" id="GO:0009423">
    <property type="term" value="P:chorismate biosynthetic process"/>
    <property type="evidence" value="ECO:0007669"/>
    <property type="project" value="UniProtKB-UniRule"/>
</dbReference>
<dbReference type="CDD" id="cd00464">
    <property type="entry name" value="SK"/>
    <property type="match status" value="1"/>
</dbReference>
<dbReference type="FunFam" id="3.40.50.300:FF:000099">
    <property type="entry name" value="Shikimate kinase 1"/>
    <property type="match status" value="1"/>
</dbReference>
<dbReference type="Gene3D" id="3.40.50.300">
    <property type="entry name" value="P-loop containing nucleotide triphosphate hydrolases"/>
    <property type="match status" value="1"/>
</dbReference>
<dbReference type="HAMAP" id="MF_00109">
    <property type="entry name" value="Shikimate_kinase"/>
    <property type="match status" value="1"/>
</dbReference>
<dbReference type="InterPro" id="IPR027417">
    <property type="entry name" value="P-loop_NTPase"/>
</dbReference>
<dbReference type="InterPro" id="IPR031322">
    <property type="entry name" value="Shikimate/glucono_kinase"/>
</dbReference>
<dbReference type="InterPro" id="IPR000623">
    <property type="entry name" value="Shikimate_kinase/TSH1"/>
</dbReference>
<dbReference type="InterPro" id="IPR023000">
    <property type="entry name" value="Shikimate_kinase_CS"/>
</dbReference>
<dbReference type="NCBIfam" id="NF003456">
    <property type="entry name" value="PRK05057.1"/>
    <property type="match status" value="1"/>
</dbReference>
<dbReference type="PANTHER" id="PTHR21087">
    <property type="entry name" value="SHIKIMATE KINASE"/>
    <property type="match status" value="1"/>
</dbReference>
<dbReference type="PANTHER" id="PTHR21087:SF16">
    <property type="entry name" value="SHIKIMATE KINASE 1, CHLOROPLASTIC"/>
    <property type="match status" value="1"/>
</dbReference>
<dbReference type="Pfam" id="PF01202">
    <property type="entry name" value="SKI"/>
    <property type="match status" value="1"/>
</dbReference>
<dbReference type="PRINTS" id="PR01100">
    <property type="entry name" value="SHIKIMTKNASE"/>
</dbReference>
<dbReference type="SUPFAM" id="SSF52540">
    <property type="entry name" value="P-loop containing nucleoside triphosphate hydrolases"/>
    <property type="match status" value="1"/>
</dbReference>
<dbReference type="PROSITE" id="PS01128">
    <property type="entry name" value="SHIKIMATE_KINASE"/>
    <property type="match status" value="1"/>
</dbReference>
<accession>Q0I053</accession>
<feature type="chain" id="PRO_1000023001" description="Shikimate kinase">
    <location>
        <begin position="1"/>
        <end position="171"/>
    </location>
</feature>
<feature type="binding site" evidence="1">
    <location>
        <begin position="14"/>
        <end position="19"/>
    </location>
    <ligand>
        <name>ATP</name>
        <dbReference type="ChEBI" id="CHEBI:30616"/>
    </ligand>
</feature>
<feature type="binding site" evidence="1">
    <location>
        <position position="18"/>
    </location>
    <ligand>
        <name>Mg(2+)</name>
        <dbReference type="ChEBI" id="CHEBI:18420"/>
    </ligand>
</feature>
<feature type="binding site" evidence="1">
    <location>
        <position position="36"/>
    </location>
    <ligand>
        <name>substrate</name>
    </ligand>
</feature>
<feature type="binding site" evidence="1">
    <location>
        <position position="60"/>
    </location>
    <ligand>
        <name>substrate</name>
    </ligand>
</feature>
<feature type="binding site" evidence="1">
    <location>
        <position position="82"/>
    </location>
    <ligand>
        <name>substrate</name>
    </ligand>
</feature>
<feature type="binding site" evidence="1">
    <location>
        <position position="120"/>
    </location>
    <ligand>
        <name>ATP</name>
        <dbReference type="ChEBI" id="CHEBI:30616"/>
    </ligand>
</feature>
<feature type="binding site" evidence="1">
    <location>
        <position position="139"/>
    </location>
    <ligand>
        <name>substrate</name>
    </ligand>
</feature>
<feature type="binding site" evidence="1">
    <location>
        <position position="156"/>
    </location>
    <ligand>
        <name>ATP</name>
        <dbReference type="ChEBI" id="CHEBI:30616"/>
    </ligand>
</feature>
<name>AROK_SHESR</name>